<dbReference type="EMBL" id="L29188">
    <property type="protein sequence ID" value="AAB59682.1"/>
    <property type="molecule type" value="Genomic_DNA"/>
</dbReference>
<dbReference type="EMBL" id="L00109">
    <property type="protein sequence ID" value="AAB59682.1"/>
    <property type="status" value="JOINED"/>
    <property type="molecule type" value="Genomic_DNA"/>
</dbReference>
<dbReference type="EMBL" id="L00110">
    <property type="protein sequence ID" value="AAB59682.1"/>
    <property type="status" value="JOINED"/>
    <property type="molecule type" value="Genomic_DNA"/>
</dbReference>
<dbReference type="EMBL" id="V01231">
    <property type="protein sequence ID" value="CAA24541.1"/>
    <property type="molecule type" value="mRNA"/>
</dbReference>
<dbReference type="EMBL" id="M11597">
    <property type="protein sequence ID" value="AAA40847.1"/>
    <property type="molecule type" value="mRNA"/>
</dbReference>
<dbReference type="PIR" id="A01524">
    <property type="entry name" value="TCRTR"/>
</dbReference>
<dbReference type="PIR" id="B44173">
    <property type="entry name" value="B44173"/>
</dbReference>
<dbReference type="RefSeq" id="NP_001029127.1">
    <property type="nucleotide sequence ID" value="NM_001033955.1"/>
</dbReference>
<dbReference type="RefSeq" id="NP_001029128.1">
    <property type="nucleotide sequence ID" value="NM_001033956.1"/>
</dbReference>
<dbReference type="BioGRID" id="246427">
    <property type="interactions" value="3"/>
</dbReference>
<dbReference type="BindingDB" id="P01256"/>
<dbReference type="ChEMBL" id="CHEMBL5735"/>
<dbReference type="ABCD" id="P01256">
    <property type="antibodies" value="1 sequenced antibody"/>
</dbReference>
<dbReference type="GeneID" id="24241"/>
<dbReference type="KEGG" id="rno:24241"/>
<dbReference type="AGR" id="RGD:2254"/>
<dbReference type="CTD" id="796"/>
<dbReference type="RGD" id="2254">
    <property type="gene designation" value="Calca"/>
</dbReference>
<dbReference type="OrthoDB" id="9929923at2759"/>
<dbReference type="Proteomes" id="UP000002494">
    <property type="component" value="Unplaced"/>
</dbReference>
<dbReference type="GO" id="GO:0030424">
    <property type="term" value="C:axon"/>
    <property type="evidence" value="ECO:0000314"/>
    <property type="project" value="RGD"/>
</dbReference>
<dbReference type="GO" id="GO:0005737">
    <property type="term" value="C:cytoplasm"/>
    <property type="evidence" value="ECO:0000266"/>
    <property type="project" value="RGD"/>
</dbReference>
<dbReference type="GO" id="GO:0005576">
    <property type="term" value="C:extracellular region"/>
    <property type="evidence" value="ECO:0000266"/>
    <property type="project" value="RGD"/>
</dbReference>
<dbReference type="GO" id="GO:0005615">
    <property type="term" value="C:extracellular space"/>
    <property type="evidence" value="ECO:0000266"/>
    <property type="project" value="RGD"/>
</dbReference>
<dbReference type="GO" id="GO:0098686">
    <property type="term" value="C:hippocampal mossy fiber to CA3 synapse"/>
    <property type="evidence" value="ECO:0000314"/>
    <property type="project" value="SynGO"/>
</dbReference>
<dbReference type="GO" id="GO:0043005">
    <property type="term" value="C:neuron projection"/>
    <property type="evidence" value="ECO:0000266"/>
    <property type="project" value="RGD"/>
</dbReference>
<dbReference type="GO" id="GO:0043025">
    <property type="term" value="C:neuronal cell body"/>
    <property type="evidence" value="ECO:0000314"/>
    <property type="project" value="RGD"/>
</dbReference>
<dbReference type="GO" id="GO:0098992">
    <property type="term" value="C:neuronal dense core vesicle"/>
    <property type="evidence" value="ECO:0000314"/>
    <property type="project" value="SynGO"/>
</dbReference>
<dbReference type="GO" id="GO:0043195">
    <property type="term" value="C:terminal bouton"/>
    <property type="evidence" value="ECO:0000266"/>
    <property type="project" value="RGD"/>
</dbReference>
<dbReference type="GO" id="GO:0031716">
    <property type="term" value="F:calcitonin receptor binding"/>
    <property type="evidence" value="ECO:0000266"/>
    <property type="project" value="RGD"/>
</dbReference>
<dbReference type="GO" id="GO:0005179">
    <property type="term" value="F:hormone activity"/>
    <property type="evidence" value="ECO:0000266"/>
    <property type="project" value="RGD"/>
</dbReference>
<dbReference type="GO" id="GO:0042802">
    <property type="term" value="F:identical protein binding"/>
    <property type="evidence" value="ECO:0000266"/>
    <property type="project" value="RGD"/>
</dbReference>
<dbReference type="GO" id="GO:0005184">
    <property type="term" value="F:neuropeptide hormone activity"/>
    <property type="evidence" value="ECO:0000304"/>
    <property type="project" value="RGD"/>
</dbReference>
<dbReference type="GO" id="GO:0044877">
    <property type="term" value="F:protein-containing complex binding"/>
    <property type="evidence" value="ECO:0000266"/>
    <property type="project" value="RGD"/>
</dbReference>
<dbReference type="GO" id="GO:0005102">
    <property type="term" value="F:signaling receptor binding"/>
    <property type="evidence" value="ECO:0000266"/>
    <property type="project" value="RGD"/>
</dbReference>
<dbReference type="GO" id="GO:0007189">
    <property type="term" value="P:adenylate cyclase-activating G protein-coupled receptor signaling pathway"/>
    <property type="evidence" value="ECO:0000266"/>
    <property type="project" value="RGD"/>
</dbReference>
<dbReference type="GO" id="GO:0150060">
    <property type="term" value="P:amylin receptor 2 signaling pathway"/>
    <property type="evidence" value="ECO:0000266"/>
    <property type="project" value="RGD"/>
</dbReference>
<dbReference type="GO" id="GO:0001984">
    <property type="term" value="P:artery vasodilation involved in baroreceptor response to increased systemic arterial blood pressure"/>
    <property type="evidence" value="ECO:0000266"/>
    <property type="project" value="RGD"/>
</dbReference>
<dbReference type="GO" id="GO:0097646">
    <property type="term" value="P:calcitonin family receptor signaling pathway"/>
    <property type="evidence" value="ECO:0000266"/>
    <property type="project" value="RGD"/>
</dbReference>
<dbReference type="GO" id="GO:1990408">
    <property type="term" value="P:calcitonin gene-related peptide receptor signaling pathway"/>
    <property type="evidence" value="ECO:0000266"/>
    <property type="project" value="RGD"/>
</dbReference>
<dbReference type="GO" id="GO:0007155">
    <property type="term" value="P:cell adhesion"/>
    <property type="evidence" value="ECO:0000266"/>
    <property type="project" value="RGD"/>
</dbReference>
<dbReference type="GO" id="GO:1990090">
    <property type="term" value="P:cellular response to nerve growth factor stimulus"/>
    <property type="evidence" value="ECO:0000270"/>
    <property type="project" value="RGD"/>
</dbReference>
<dbReference type="GO" id="GO:0071356">
    <property type="term" value="P:cellular response to tumor necrosis factor"/>
    <property type="evidence" value="ECO:0000270"/>
    <property type="project" value="RGD"/>
</dbReference>
<dbReference type="GO" id="GO:0050965">
    <property type="term" value="P:detection of temperature stimulus involved in sensory perception of pain"/>
    <property type="evidence" value="ECO:0000266"/>
    <property type="project" value="RGD"/>
</dbReference>
<dbReference type="GO" id="GO:0007566">
    <property type="term" value="P:embryo implantation"/>
    <property type="evidence" value="ECO:0000266"/>
    <property type="project" value="RGD"/>
</dbReference>
<dbReference type="GO" id="GO:0043542">
    <property type="term" value="P:endothelial cell migration"/>
    <property type="evidence" value="ECO:0000266"/>
    <property type="project" value="RGD"/>
</dbReference>
<dbReference type="GO" id="GO:0001935">
    <property type="term" value="P:endothelial cell proliferation"/>
    <property type="evidence" value="ECO:0000266"/>
    <property type="project" value="RGD"/>
</dbReference>
<dbReference type="GO" id="GO:0007631">
    <property type="term" value="P:feeding behavior"/>
    <property type="evidence" value="ECO:0000266"/>
    <property type="project" value="RGD"/>
</dbReference>
<dbReference type="GO" id="GO:0002031">
    <property type="term" value="P:G protein-coupled receptor internalization"/>
    <property type="evidence" value="ECO:0000266"/>
    <property type="project" value="RGD"/>
</dbReference>
<dbReference type="GO" id="GO:0006954">
    <property type="term" value="P:inflammatory response"/>
    <property type="evidence" value="ECO:0000266"/>
    <property type="project" value="RGD"/>
</dbReference>
<dbReference type="GO" id="GO:0006874">
    <property type="term" value="P:intracellular calcium ion homeostasis"/>
    <property type="evidence" value="ECO:0000266"/>
    <property type="project" value="RGD"/>
</dbReference>
<dbReference type="GO" id="GO:0007159">
    <property type="term" value="P:leukocyte cell-cell adhesion"/>
    <property type="evidence" value="ECO:0000266"/>
    <property type="project" value="RGD"/>
</dbReference>
<dbReference type="GO" id="GO:0002548">
    <property type="term" value="P:monocyte chemotaxis"/>
    <property type="evidence" value="ECO:0000266"/>
    <property type="project" value="RGD"/>
</dbReference>
<dbReference type="GO" id="GO:0045776">
    <property type="term" value="P:negative regulation of blood pressure"/>
    <property type="evidence" value="ECO:0000315"/>
    <property type="project" value="RGD"/>
</dbReference>
<dbReference type="GO" id="GO:0045779">
    <property type="term" value="P:negative regulation of bone resorption"/>
    <property type="evidence" value="ECO:0000266"/>
    <property type="project" value="RGD"/>
</dbReference>
<dbReference type="GO" id="GO:0010523">
    <property type="term" value="P:negative regulation of calcium ion transport into cytosol"/>
    <property type="evidence" value="ECO:0000266"/>
    <property type="project" value="RGD"/>
</dbReference>
<dbReference type="GO" id="GO:0045892">
    <property type="term" value="P:negative regulation of DNA-templated transcription"/>
    <property type="evidence" value="ECO:0000266"/>
    <property type="project" value="RGD"/>
</dbReference>
<dbReference type="GO" id="GO:0030279">
    <property type="term" value="P:negative regulation of ossification"/>
    <property type="evidence" value="ECO:0000266"/>
    <property type="project" value="RGD"/>
</dbReference>
<dbReference type="GO" id="GO:0045671">
    <property type="term" value="P:negative regulation of osteoclast differentiation"/>
    <property type="evidence" value="ECO:0000266"/>
    <property type="project" value="RGD"/>
</dbReference>
<dbReference type="GO" id="GO:0045986">
    <property type="term" value="P:negative regulation of smooth muscle contraction"/>
    <property type="evidence" value="ECO:0000315"/>
    <property type="project" value="RGD"/>
</dbReference>
<dbReference type="GO" id="GO:0007218">
    <property type="term" value="P:neuropeptide signaling pathway"/>
    <property type="evidence" value="ECO:0000266"/>
    <property type="project" value="RGD"/>
</dbReference>
<dbReference type="GO" id="GO:0001503">
    <property type="term" value="P:ossification"/>
    <property type="evidence" value="ECO:0000266"/>
    <property type="project" value="RGD"/>
</dbReference>
<dbReference type="GO" id="GO:0007200">
    <property type="term" value="P:phospholipase C-activating G protein-coupled receptor signaling pathway"/>
    <property type="evidence" value="ECO:0000266"/>
    <property type="project" value="RGD"/>
</dbReference>
<dbReference type="GO" id="GO:0045785">
    <property type="term" value="P:positive regulation of cell adhesion"/>
    <property type="evidence" value="ECO:0000266"/>
    <property type="project" value="RGD"/>
</dbReference>
<dbReference type="GO" id="GO:0007204">
    <property type="term" value="P:positive regulation of cytosolic calcium ion concentration"/>
    <property type="evidence" value="ECO:0000266"/>
    <property type="project" value="RGD"/>
</dbReference>
<dbReference type="GO" id="GO:0032730">
    <property type="term" value="P:positive regulation of interleukin-1 alpha production"/>
    <property type="evidence" value="ECO:0000266"/>
    <property type="project" value="RGD"/>
</dbReference>
<dbReference type="GO" id="GO:0032757">
    <property type="term" value="P:positive regulation of interleukin-8 production"/>
    <property type="evidence" value="ECO:0000266"/>
    <property type="project" value="RGD"/>
</dbReference>
<dbReference type="GO" id="GO:0045651">
    <property type="term" value="P:positive regulation of macrophage differentiation"/>
    <property type="evidence" value="ECO:0000266"/>
    <property type="project" value="RGD"/>
</dbReference>
<dbReference type="GO" id="GO:0031623">
    <property type="term" value="P:receptor internalization"/>
    <property type="evidence" value="ECO:0000266"/>
    <property type="project" value="RGD"/>
</dbReference>
<dbReference type="GO" id="GO:0051480">
    <property type="term" value="P:regulation of cytosolic calcium ion concentration"/>
    <property type="evidence" value="ECO:0000266"/>
    <property type="project" value="RGD"/>
</dbReference>
<dbReference type="GO" id="GO:0009408">
    <property type="term" value="P:response to heat"/>
    <property type="evidence" value="ECO:0000266"/>
    <property type="project" value="RGD"/>
</dbReference>
<dbReference type="GO" id="GO:0048265">
    <property type="term" value="P:response to pain"/>
    <property type="evidence" value="ECO:0000266"/>
    <property type="project" value="RGD"/>
</dbReference>
<dbReference type="GO" id="GO:0006939">
    <property type="term" value="P:smooth muscle contraction"/>
    <property type="evidence" value="ECO:0000266"/>
    <property type="project" value="RGD"/>
</dbReference>
<dbReference type="GO" id="GO:0001944">
    <property type="term" value="P:vasculature development"/>
    <property type="evidence" value="ECO:0000266"/>
    <property type="project" value="RGD"/>
</dbReference>
<dbReference type="GO" id="GO:0042311">
    <property type="term" value="P:vasodilation"/>
    <property type="evidence" value="ECO:0000314"/>
    <property type="project" value="RGD"/>
</dbReference>
<dbReference type="Gene3D" id="6.10.250.2190">
    <property type="match status" value="1"/>
</dbReference>
<dbReference type="InterPro" id="IPR021117">
    <property type="entry name" value="Calcitonin-like"/>
</dbReference>
<dbReference type="InterPro" id="IPR021116">
    <property type="entry name" value="Calcitonin/adrenomedullin"/>
</dbReference>
<dbReference type="InterPro" id="IPR018360">
    <property type="entry name" value="Calcitonin_CS"/>
</dbReference>
<dbReference type="InterPro" id="IPR015476">
    <property type="entry name" value="Calcitonin_gene-rel_peptide"/>
</dbReference>
<dbReference type="InterPro" id="IPR001693">
    <property type="entry name" value="Calcitonin_peptide-like"/>
</dbReference>
<dbReference type="PANTHER" id="PTHR10505:SF3">
    <property type="entry name" value="CALCITONIN GENE-RELATED PEPTIDE 2"/>
    <property type="match status" value="1"/>
</dbReference>
<dbReference type="PANTHER" id="PTHR10505">
    <property type="entry name" value="CALCITONIN-RELATED"/>
    <property type="match status" value="1"/>
</dbReference>
<dbReference type="Pfam" id="PF00214">
    <property type="entry name" value="Calc_CGRP_IAPP"/>
    <property type="match status" value="1"/>
</dbReference>
<dbReference type="PRINTS" id="PR00817">
    <property type="entry name" value="CALCITONINB"/>
</dbReference>
<dbReference type="SMART" id="SM00113">
    <property type="entry name" value="CALCITONIN"/>
    <property type="match status" value="1"/>
</dbReference>
<dbReference type="PROSITE" id="PS00258">
    <property type="entry name" value="CALCITONIN"/>
    <property type="match status" value="1"/>
</dbReference>
<accession>P01256</accession>
<gene>
    <name evidence="4" type="primary">Calca</name>
    <name type="synonym">Calc</name>
</gene>
<name>CALCA_RAT</name>
<evidence type="ECO:0000250" key="1"/>
<evidence type="ECO:0000250" key="2">
    <source>
        <dbReference type="UniProtKB" id="P06881"/>
    </source>
</evidence>
<evidence type="ECO:0000305" key="3"/>
<evidence type="ECO:0000312" key="4">
    <source>
        <dbReference type="RGD" id="2254"/>
    </source>
</evidence>
<sequence length="128" mass="13948">MGFLKFSPFLVVSILLLYQACGLQAVPLRSTLESSPGMAATLSEEEARLLLAALVQNYMQMKVRELEQEQEAEGSSVTAQKRSCNTATCVTHRLAGLLSRSGGVVKDNFVPTNVGSEAFGRRRRDLQA</sequence>
<feature type="signal peptide">
    <location>
        <begin position="1"/>
        <end position="25"/>
    </location>
</feature>
<feature type="propeptide" id="PRO_0000004065">
    <location>
        <begin position="26"/>
        <end position="80"/>
    </location>
</feature>
<feature type="peptide" id="PRO_0000004066" description="Calcitonin gene-related peptide 1">
    <location>
        <begin position="83"/>
        <end position="119"/>
    </location>
</feature>
<feature type="propeptide" id="PRO_0000004067">
    <location>
        <begin position="125"/>
        <end position="128"/>
    </location>
</feature>
<feature type="modified residue" description="Phenylalanine amide" evidence="1">
    <location>
        <position position="119"/>
    </location>
</feature>
<feature type="disulfide bond" evidence="2">
    <location>
        <begin position="84"/>
        <end position="89"/>
    </location>
</feature>
<feature type="sequence conflict" description="In Ref. 2; AAB59682/CAA24541 and 3; AAA40847." evidence="3" ref="2 3">
    <location>
        <position position="40"/>
    </location>
</feature>
<feature type="sequence conflict" description="In Ref. 2; AAB59682/CAA24541 and 3; AAA40847." evidence="3" ref="2 3">
    <location>
        <position position="51"/>
    </location>
</feature>
<feature type="sequence conflict" description="In Ref. 2; AAB59682/CAA24541 and 3; AAA40847." evidence="3" ref="2 3">
    <original>Q</original>
    <variation>EEQ</variation>
    <location>
        <position position="70"/>
    </location>
</feature>
<feature type="sequence conflict" description="In Ref. 3; AAA40847." evidence="3" ref="3">
    <original>S</original>
    <variation>R</variation>
    <location>
        <position position="99"/>
    </location>
</feature>
<proteinExistence type="evidence at transcript level"/>
<organism>
    <name type="scientific">Rattus norvegicus</name>
    <name type="common">Rat</name>
    <dbReference type="NCBI Taxonomy" id="10116"/>
    <lineage>
        <taxon>Eukaryota</taxon>
        <taxon>Metazoa</taxon>
        <taxon>Chordata</taxon>
        <taxon>Craniata</taxon>
        <taxon>Vertebrata</taxon>
        <taxon>Euteleostomi</taxon>
        <taxon>Mammalia</taxon>
        <taxon>Eutheria</taxon>
        <taxon>Euarchontoglires</taxon>
        <taxon>Glires</taxon>
        <taxon>Rodentia</taxon>
        <taxon>Myomorpha</taxon>
        <taxon>Muroidea</taxon>
        <taxon>Muridae</taxon>
        <taxon>Murinae</taxon>
        <taxon>Rattus</taxon>
    </lineage>
</organism>
<comment type="function">
    <text evidence="2">CGRP1/CALCA is a peptide hormone that induces vasodilation mediated by the CALCRL-RAMP1 receptor complex. Dilates a variety of vessels including the coronary, cerebral and systemic vasculature. Its abundance in the CNS also points toward a neurotransmitter or neuromodulator role. It also elevates platelet cAMP. CGRP1 can also bind and activate CALCR-RAMP1 (AMYR1) receptor complex.</text>
</comment>
<comment type="subcellular location">
    <subcellularLocation>
        <location evidence="2">Secreted</location>
    </subcellularLocation>
</comment>
<comment type="alternative products">
    <event type="alternative splicing"/>
    <isoform>
        <id>P01256-1</id>
        <name>Calcitonin-gene related peptide I</name>
        <sequence type="displayed"/>
    </isoform>
    <isoform>
        <id>P01257-1</id>
        <name>Calcitonin</name>
        <sequence type="external"/>
    </isoform>
</comment>
<comment type="similarity">
    <text evidence="3">Belongs to the calcitonin family.</text>
</comment>
<protein>
    <recommendedName>
        <fullName>Calcitonin gene-related peptide 1</fullName>
        <shortName evidence="2">CGRP1</shortName>
    </recommendedName>
    <alternativeName>
        <fullName>Alpha-type CGRP</fullName>
    </alternativeName>
    <alternativeName>
        <fullName>Calcitonin gene-related peptide I</fullName>
        <shortName>CGRP-I</shortName>
    </alternativeName>
</protein>
<keyword id="KW-0025">Alternative splicing</keyword>
<keyword id="KW-0027">Amidation</keyword>
<keyword id="KW-0165">Cleavage on pair of basic residues</keyword>
<keyword id="KW-1015">Disulfide bond</keyword>
<keyword id="KW-0372">Hormone</keyword>
<keyword id="KW-1185">Reference proteome</keyword>
<keyword id="KW-0964">Secreted</keyword>
<keyword id="KW-0732">Signal</keyword>
<reference key="1">
    <citation type="journal article" date="1985" name="Proc. Natl. Acad. Sci. U.S.A.">
        <title>Alternative RNA processing events in human calcitonin/calcitonin gene-related peptide gene expression.</title>
        <authorList>
            <person name="Jonas V."/>
            <person name="Lin C.R."/>
            <person name="Kawashima E."/>
            <person name="Semon D."/>
            <person name="Swanson L.W."/>
            <person name="Mermod J.-J."/>
            <person name="Evans R.M."/>
            <person name="Rosenfeld M.G."/>
        </authorList>
    </citation>
    <scope>NUCLEOTIDE SEQUENCE</scope>
</reference>
<reference key="2">
    <citation type="journal article" date="1982" name="Nature">
        <title>Alternative RNA processing in calcitonin gene expression generates mRNAs encoding different polypeptide products.</title>
        <authorList>
            <person name="Amara S.G."/>
            <person name="Jonas V."/>
            <person name="Rosenfeld M.G."/>
            <person name="Ong E.S."/>
            <person name="Evans R.M."/>
        </authorList>
    </citation>
    <scope>NUCLEOTIDE SEQUENCE [GENOMIC DNA]</scope>
</reference>
<reference key="3">
    <citation type="journal article" date="1985" name="Science">
        <title>Expression in brain of a messenger RNA encoding a novel neuropeptide homologous to calcitonin gene-related peptide.</title>
        <authorList>
            <person name="Amara S.G."/>
            <person name="Arriza J.L."/>
            <person name="Leff S.E."/>
            <person name="Swanson L.W."/>
            <person name="Evans R.M."/>
            <person name="Rosenfeld M.G."/>
        </authorList>
    </citation>
    <scope>NUCLEOTIDE SEQUENCE [MRNA]</scope>
</reference>